<sequence length="237" mass="25670">MAPKKVLLALTSYNDVFYSDGAKTGVFVVEALHPFNTFRKEGFEVDFVSETGKFGWDEHSLAKDFLNGQDETDFKNKDSDFNKTLAKIKTPKEVNADDYQIFFASAGHGTLFDYPKAKDLQDIASEIYANGGVVAAVCHGPAIFDGLTDKKTGRPLIEGKSITGFTDVGETILGVDSILKAKNLATVEDVAKKYGAKYLAPVGPWDDYSITDGRLVTGVNPASAHSTAVRSIDALKN</sequence>
<feature type="chain" id="PRO_0000157852" description="Glutathione-independent glyoxalase HSP31">
    <location>
        <begin position="1"/>
        <end position="237"/>
    </location>
</feature>
<feature type="active site" evidence="13 14">
    <location>
        <position position="138"/>
    </location>
</feature>
<feature type="active site" evidence="13 14">
    <location>
        <position position="139"/>
    </location>
</feature>
<feature type="active site" evidence="13 14">
    <location>
        <position position="170"/>
    </location>
</feature>
<feature type="modified residue" description="Cysteine sulfinic acid (-SO2H)" evidence="4">
    <location>
        <position position="138"/>
    </location>
</feature>
<feature type="sequence conflict" description="In Ref. 3; AAS56663." evidence="12" ref="3">
    <original>A</original>
    <variation>T</variation>
    <location>
        <position position="31"/>
    </location>
</feature>
<feature type="strand" evidence="17">
    <location>
        <begin position="5"/>
        <end position="10"/>
    </location>
</feature>
<feature type="helix" evidence="17">
    <location>
        <begin position="28"/>
        <end position="40"/>
    </location>
</feature>
<feature type="strand" evidence="17">
    <location>
        <begin position="44"/>
        <end position="49"/>
    </location>
</feature>
<feature type="strand" evidence="16">
    <location>
        <begin position="50"/>
        <end position="52"/>
    </location>
</feature>
<feature type="helix" evidence="17">
    <location>
        <begin position="58"/>
        <end position="61"/>
    </location>
</feature>
<feature type="turn" evidence="17">
    <location>
        <begin position="63"/>
        <end position="65"/>
    </location>
</feature>
<feature type="helix" evidence="17">
    <location>
        <begin position="68"/>
        <end position="75"/>
    </location>
</feature>
<feature type="helix" evidence="17">
    <location>
        <begin position="80"/>
        <end position="85"/>
    </location>
</feature>
<feature type="helix" evidence="17">
    <location>
        <begin position="91"/>
        <end position="93"/>
    </location>
</feature>
<feature type="helix" evidence="17">
    <location>
        <begin position="96"/>
        <end position="98"/>
    </location>
</feature>
<feature type="strand" evidence="17">
    <location>
        <begin position="100"/>
        <end position="104"/>
    </location>
</feature>
<feature type="helix" evidence="17">
    <location>
        <begin position="110"/>
        <end position="113"/>
    </location>
</feature>
<feature type="helix" evidence="17">
    <location>
        <begin position="114"/>
        <end position="116"/>
    </location>
</feature>
<feature type="helix" evidence="17">
    <location>
        <begin position="118"/>
        <end position="129"/>
    </location>
</feature>
<feature type="strand" evidence="17">
    <location>
        <begin position="133"/>
        <end position="137"/>
    </location>
</feature>
<feature type="helix" evidence="17">
    <location>
        <begin position="140"/>
        <end position="144"/>
    </location>
</feature>
<feature type="turn" evidence="17">
    <location>
        <begin position="150"/>
        <end position="152"/>
    </location>
</feature>
<feature type="strand" evidence="17">
    <location>
        <begin position="153"/>
        <end position="155"/>
    </location>
</feature>
<feature type="turn" evidence="17">
    <location>
        <begin position="156"/>
        <end position="159"/>
    </location>
</feature>
<feature type="helix" evidence="17">
    <location>
        <begin position="167"/>
        <end position="172"/>
    </location>
</feature>
<feature type="helix" evidence="17">
    <location>
        <begin position="176"/>
        <end position="181"/>
    </location>
</feature>
<feature type="helix" evidence="17">
    <location>
        <begin position="187"/>
        <end position="193"/>
    </location>
</feature>
<feature type="strand" evidence="17">
    <location>
        <begin position="209"/>
        <end position="212"/>
    </location>
</feature>
<feature type="strand" evidence="17">
    <location>
        <begin position="215"/>
        <end position="218"/>
    </location>
</feature>
<feature type="helix" evidence="17">
    <location>
        <begin position="221"/>
        <end position="223"/>
    </location>
</feature>
<feature type="helix" evidence="17">
    <location>
        <begin position="224"/>
        <end position="235"/>
    </location>
</feature>
<gene>
    <name evidence="10" type="primary">HSP31</name>
    <name evidence="15" type="ordered locus">YDR533C</name>
    <name type="ORF">D9719.36</name>
</gene>
<proteinExistence type="evidence at protein level"/>
<keyword id="KW-0002">3D-structure</keyword>
<keyword id="KW-0963">Cytoplasm</keyword>
<keyword id="KW-0456">Lyase</keyword>
<keyword id="KW-0558">Oxidation</keyword>
<keyword id="KW-1185">Reference proteome</keyword>
<keyword id="KW-0346">Stress response</keyword>
<protein>
    <recommendedName>
        <fullName evidence="11">Glutathione-independent glyoxalase HSP31</fullName>
        <ecNumber evidence="7 9">4.2.1.130</ecNumber>
    </recommendedName>
    <alternativeName>
        <fullName evidence="1">Glyoxalase 3 homolog 1</fullName>
    </alternativeName>
    <alternativeName>
        <fullName evidence="10">Heat shock protein 31</fullName>
    </alternativeName>
</protein>
<accession>Q04432</accession>
<accession>D6VTF4</accession>
<accession>E9P8V9</accession>
<name>HSP31_YEAST</name>
<dbReference type="EC" id="4.2.1.130" evidence="7 9"/>
<dbReference type="EMBL" id="U33057">
    <property type="protein sequence ID" value="AAB64972.1"/>
    <property type="molecule type" value="Genomic_DNA"/>
</dbReference>
<dbReference type="EMBL" id="AY558337">
    <property type="protein sequence ID" value="AAS56663.1"/>
    <property type="molecule type" value="Genomic_DNA"/>
</dbReference>
<dbReference type="EMBL" id="BK006938">
    <property type="protein sequence ID" value="DAA12364.1"/>
    <property type="molecule type" value="Genomic_DNA"/>
</dbReference>
<dbReference type="PIR" id="S69588">
    <property type="entry name" value="S69588"/>
</dbReference>
<dbReference type="RefSeq" id="NP_010822.1">
    <property type="nucleotide sequence ID" value="NM_001180841.1"/>
</dbReference>
<dbReference type="PDB" id="1QVV">
    <property type="method" value="X-ray"/>
    <property type="resolution" value="2.35 A"/>
    <property type="chains" value="A/B/C/D=1-237"/>
</dbReference>
<dbReference type="PDB" id="1QVW">
    <property type="method" value="X-ray"/>
    <property type="resolution" value="1.90 A"/>
    <property type="chains" value="A/B=1-237"/>
</dbReference>
<dbReference type="PDB" id="1QVZ">
    <property type="method" value="X-ray"/>
    <property type="resolution" value="1.85 A"/>
    <property type="chains" value="A/B=1-237"/>
</dbReference>
<dbReference type="PDB" id="4QYX">
    <property type="method" value="X-ray"/>
    <property type="resolution" value="1.69 A"/>
    <property type="chains" value="A=1-237"/>
</dbReference>
<dbReference type="PDBsum" id="1QVV"/>
<dbReference type="PDBsum" id="1QVW"/>
<dbReference type="PDBsum" id="1QVZ"/>
<dbReference type="PDBsum" id="4QYX"/>
<dbReference type="SMR" id="Q04432"/>
<dbReference type="BioGRID" id="32582">
    <property type="interactions" value="83"/>
</dbReference>
<dbReference type="DIP" id="DIP-4315N"/>
<dbReference type="FunCoup" id="Q04432">
    <property type="interactions" value="139"/>
</dbReference>
<dbReference type="IntAct" id="Q04432">
    <property type="interactions" value="2"/>
</dbReference>
<dbReference type="MINT" id="Q04432"/>
<dbReference type="STRING" id="4932.YDR533C"/>
<dbReference type="MEROPS" id="C56.004"/>
<dbReference type="iPTMnet" id="Q04432"/>
<dbReference type="PaxDb" id="4932-YDR533C"/>
<dbReference type="PeptideAtlas" id="Q04432"/>
<dbReference type="TopDownProteomics" id="Q04432"/>
<dbReference type="EnsemblFungi" id="YDR533C_mRNA">
    <property type="protein sequence ID" value="YDR533C"/>
    <property type="gene ID" value="YDR533C"/>
</dbReference>
<dbReference type="GeneID" id="852146"/>
<dbReference type="KEGG" id="sce:YDR533C"/>
<dbReference type="AGR" id="SGD:S000002941"/>
<dbReference type="SGD" id="S000002941">
    <property type="gene designation" value="HSP31"/>
</dbReference>
<dbReference type="VEuPathDB" id="FungiDB:YDR533C"/>
<dbReference type="eggNOG" id="ENOG502RZ3Y">
    <property type="taxonomic scope" value="Eukaryota"/>
</dbReference>
<dbReference type="GeneTree" id="ENSGT00940000176307"/>
<dbReference type="HOGENOM" id="CLU_070319_1_0_1"/>
<dbReference type="InParanoid" id="Q04432"/>
<dbReference type="OMA" id="LHPFEVF"/>
<dbReference type="OrthoDB" id="543156at2759"/>
<dbReference type="BioCyc" id="YEAST:G3O-30044-MONOMER"/>
<dbReference type="BRENDA" id="4.2.1.130">
    <property type="organism ID" value="984"/>
</dbReference>
<dbReference type="BioGRID-ORCS" id="852146">
    <property type="hits" value="1 hit in 10 CRISPR screens"/>
</dbReference>
<dbReference type="CD-CODE" id="E03F929F">
    <property type="entry name" value="Stress granule"/>
</dbReference>
<dbReference type="EvolutionaryTrace" id="Q04432"/>
<dbReference type="PRO" id="PR:Q04432"/>
<dbReference type="Proteomes" id="UP000002311">
    <property type="component" value="Chromosome IV"/>
</dbReference>
<dbReference type="RNAct" id="Q04432">
    <property type="molecule type" value="protein"/>
</dbReference>
<dbReference type="GO" id="GO:0005737">
    <property type="term" value="C:cytoplasm"/>
    <property type="evidence" value="ECO:0000318"/>
    <property type="project" value="GO_Central"/>
</dbReference>
<dbReference type="GO" id="GO:0010494">
    <property type="term" value="C:cytoplasmic stress granule"/>
    <property type="evidence" value="ECO:0000314"/>
    <property type="project" value="SGD"/>
</dbReference>
<dbReference type="GO" id="GO:0000932">
    <property type="term" value="C:P-body"/>
    <property type="evidence" value="ECO:0000314"/>
    <property type="project" value="SGD"/>
</dbReference>
<dbReference type="GO" id="GO:0019172">
    <property type="term" value="F:glyoxalase III activity"/>
    <property type="evidence" value="ECO:0000314"/>
    <property type="project" value="SGD"/>
</dbReference>
<dbReference type="GO" id="GO:0044183">
    <property type="term" value="F:protein folding chaperone"/>
    <property type="evidence" value="ECO:0000314"/>
    <property type="project" value="SGD"/>
</dbReference>
<dbReference type="GO" id="GO:0031669">
    <property type="term" value="P:cellular response to nutrient levels"/>
    <property type="evidence" value="ECO:0000315"/>
    <property type="project" value="SGD"/>
</dbReference>
<dbReference type="GO" id="GO:0034599">
    <property type="term" value="P:cellular response to oxidative stress"/>
    <property type="evidence" value="ECO:0000315"/>
    <property type="project" value="SGD"/>
</dbReference>
<dbReference type="GO" id="GO:0061077">
    <property type="term" value="P:chaperone-mediated protein folding"/>
    <property type="evidence" value="ECO:0000314"/>
    <property type="project" value="SGD"/>
</dbReference>
<dbReference type="GO" id="GO:0019243">
    <property type="term" value="P:methylglyoxal catabolic process to D-lactate via S-lactoyl-glutathione"/>
    <property type="evidence" value="ECO:0000314"/>
    <property type="project" value="SGD"/>
</dbReference>
<dbReference type="CDD" id="cd03147">
    <property type="entry name" value="GATase1_Ydr533c_like"/>
    <property type="match status" value="1"/>
</dbReference>
<dbReference type="FunFam" id="3.40.50.880:FF:000051">
    <property type="entry name" value="Glutathione-independent glyoxalase HSP31"/>
    <property type="match status" value="1"/>
</dbReference>
<dbReference type="Gene3D" id="3.40.50.880">
    <property type="match status" value="1"/>
</dbReference>
<dbReference type="InterPro" id="IPR029062">
    <property type="entry name" value="Class_I_gatase-like"/>
</dbReference>
<dbReference type="InterPro" id="IPR002818">
    <property type="entry name" value="DJ-1/PfpI"/>
</dbReference>
<dbReference type="InterPro" id="IPR050325">
    <property type="entry name" value="Prot/Nucl_acid_deglycase"/>
</dbReference>
<dbReference type="PANTHER" id="PTHR48094:SF11">
    <property type="entry name" value="GLUTATHIONE-INDEPENDENT GLYOXALASE HSP31-RELATED"/>
    <property type="match status" value="1"/>
</dbReference>
<dbReference type="PANTHER" id="PTHR48094">
    <property type="entry name" value="PROTEIN/NUCLEIC ACID DEGLYCASE DJ-1-RELATED"/>
    <property type="match status" value="1"/>
</dbReference>
<dbReference type="Pfam" id="PF01965">
    <property type="entry name" value="DJ-1_PfpI"/>
    <property type="match status" value="1"/>
</dbReference>
<dbReference type="SUPFAM" id="SSF52317">
    <property type="entry name" value="Class I glutamine amidotransferase-like"/>
    <property type="match status" value="1"/>
</dbReference>
<reference key="1">
    <citation type="journal article" date="1997" name="Nature">
        <title>The nucleotide sequence of Saccharomyces cerevisiae chromosome IV.</title>
        <authorList>
            <person name="Jacq C."/>
            <person name="Alt-Moerbe J."/>
            <person name="Andre B."/>
            <person name="Arnold W."/>
            <person name="Bahr A."/>
            <person name="Ballesta J.P.G."/>
            <person name="Bargues M."/>
            <person name="Baron L."/>
            <person name="Becker A."/>
            <person name="Biteau N."/>
            <person name="Bloecker H."/>
            <person name="Blugeon C."/>
            <person name="Boskovic J."/>
            <person name="Brandt P."/>
            <person name="Brueckner M."/>
            <person name="Buitrago M.J."/>
            <person name="Coster F."/>
            <person name="Delaveau T."/>
            <person name="del Rey F."/>
            <person name="Dujon B."/>
            <person name="Eide L.G."/>
            <person name="Garcia-Cantalejo J.M."/>
            <person name="Goffeau A."/>
            <person name="Gomez-Peris A."/>
            <person name="Granotier C."/>
            <person name="Hanemann V."/>
            <person name="Hankeln T."/>
            <person name="Hoheisel J.D."/>
            <person name="Jaeger W."/>
            <person name="Jimenez A."/>
            <person name="Jonniaux J.-L."/>
            <person name="Kraemer C."/>
            <person name="Kuester H."/>
            <person name="Laamanen P."/>
            <person name="Legros Y."/>
            <person name="Louis E.J."/>
            <person name="Moeller-Rieker S."/>
            <person name="Monnet A."/>
            <person name="Moro M."/>
            <person name="Mueller-Auer S."/>
            <person name="Nussbaumer B."/>
            <person name="Paricio N."/>
            <person name="Paulin L."/>
            <person name="Perea J."/>
            <person name="Perez-Alonso M."/>
            <person name="Perez-Ortin J.E."/>
            <person name="Pohl T.M."/>
            <person name="Prydz H."/>
            <person name="Purnelle B."/>
            <person name="Rasmussen S.W."/>
            <person name="Remacha M.A."/>
            <person name="Revuelta J.L."/>
            <person name="Rieger M."/>
            <person name="Salom D."/>
            <person name="Saluz H.P."/>
            <person name="Saiz J.E."/>
            <person name="Saren A.-M."/>
            <person name="Schaefer M."/>
            <person name="Scharfe M."/>
            <person name="Schmidt E.R."/>
            <person name="Schneider C."/>
            <person name="Scholler P."/>
            <person name="Schwarz S."/>
            <person name="Soler-Mira A."/>
            <person name="Urrestarazu L.A."/>
            <person name="Verhasselt P."/>
            <person name="Vissers S."/>
            <person name="Voet M."/>
            <person name="Volckaert G."/>
            <person name="Wagner G."/>
            <person name="Wambutt R."/>
            <person name="Wedler E."/>
            <person name="Wedler H."/>
            <person name="Woelfl S."/>
            <person name="Harris D.E."/>
            <person name="Bowman S."/>
            <person name="Brown D."/>
            <person name="Churcher C.M."/>
            <person name="Connor R."/>
            <person name="Dedman K."/>
            <person name="Gentles S."/>
            <person name="Hamlin N."/>
            <person name="Hunt S."/>
            <person name="Jones L."/>
            <person name="McDonald S."/>
            <person name="Murphy L.D."/>
            <person name="Niblett D."/>
            <person name="Odell C."/>
            <person name="Oliver K."/>
            <person name="Rajandream M.A."/>
            <person name="Richards C."/>
            <person name="Shore L."/>
            <person name="Walsh S.V."/>
            <person name="Barrell B.G."/>
            <person name="Dietrich F.S."/>
            <person name="Mulligan J.T."/>
            <person name="Allen E."/>
            <person name="Araujo R."/>
            <person name="Aviles E."/>
            <person name="Berno A."/>
            <person name="Carpenter J."/>
            <person name="Chen E."/>
            <person name="Cherry J.M."/>
            <person name="Chung E."/>
            <person name="Duncan M."/>
            <person name="Hunicke-Smith S."/>
            <person name="Hyman R.W."/>
            <person name="Komp C."/>
            <person name="Lashkari D."/>
            <person name="Lew H."/>
            <person name="Lin D."/>
            <person name="Mosedale D."/>
            <person name="Nakahara K."/>
            <person name="Namath A."/>
            <person name="Oefner P."/>
            <person name="Oh C."/>
            <person name="Petel F.X."/>
            <person name="Roberts D."/>
            <person name="Schramm S."/>
            <person name="Schroeder M."/>
            <person name="Shogren T."/>
            <person name="Shroff N."/>
            <person name="Winant A."/>
            <person name="Yelton M.A."/>
            <person name="Botstein D."/>
            <person name="Davis R.W."/>
            <person name="Johnston M."/>
            <person name="Andrews S."/>
            <person name="Brinkman R."/>
            <person name="Cooper J."/>
            <person name="Ding H."/>
            <person name="Du Z."/>
            <person name="Favello A."/>
            <person name="Fulton L."/>
            <person name="Gattung S."/>
            <person name="Greco T."/>
            <person name="Hallsworth K."/>
            <person name="Hawkins J."/>
            <person name="Hillier L.W."/>
            <person name="Jier M."/>
            <person name="Johnson D."/>
            <person name="Johnston L."/>
            <person name="Kirsten J."/>
            <person name="Kucaba T."/>
            <person name="Langston Y."/>
            <person name="Latreille P."/>
            <person name="Le T."/>
            <person name="Mardis E."/>
            <person name="Menezes S."/>
            <person name="Miller N."/>
            <person name="Nhan M."/>
            <person name="Pauley A."/>
            <person name="Peluso D."/>
            <person name="Rifkin L."/>
            <person name="Riles L."/>
            <person name="Taich A."/>
            <person name="Trevaskis E."/>
            <person name="Vignati D."/>
            <person name="Wilcox L."/>
            <person name="Wohldman P."/>
            <person name="Vaudin M."/>
            <person name="Wilson R."/>
            <person name="Waterston R."/>
            <person name="Albermann K."/>
            <person name="Hani J."/>
            <person name="Heumann K."/>
            <person name="Kleine K."/>
            <person name="Mewes H.-W."/>
            <person name="Zollner A."/>
            <person name="Zaccaria P."/>
        </authorList>
    </citation>
    <scope>NUCLEOTIDE SEQUENCE [LARGE SCALE GENOMIC DNA]</scope>
    <source>
        <strain>ATCC 204508 / S288c</strain>
    </source>
</reference>
<reference key="2">
    <citation type="journal article" date="2014" name="G3 (Bethesda)">
        <title>The reference genome sequence of Saccharomyces cerevisiae: Then and now.</title>
        <authorList>
            <person name="Engel S.R."/>
            <person name="Dietrich F.S."/>
            <person name="Fisk D.G."/>
            <person name="Binkley G."/>
            <person name="Balakrishnan R."/>
            <person name="Costanzo M.C."/>
            <person name="Dwight S.S."/>
            <person name="Hitz B.C."/>
            <person name="Karra K."/>
            <person name="Nash R.S."/>
            <person name="Weng S."/>
            <person name="Wong E.D."/>
            <person name="Lloyd P."/>
            <person name="Skrzypek M.S."/>
            <person name="Miyasato S.R."/>
            <person name="Simison M."/>
            <person name="Cherry J.M."/>
        </authorList>
    </citation>
    <scope>GENOME REANNOTATION</scope>
    <source>
        <strain>ATCC 204508 / S288c</strain>
    </source>
</reference>
<reference key="3">
    <citation type="journal article" date="2007" name="Genome Res.">
        <title>Approaching a complete repository of sequence-verified protein-encoding clones for Saccharomyces cerevisiae.</title>
        <authorList>
            <person name="Hu Y."/>
            <person name="Rolfs A."/>
            <person name="Bhullar B."/>
            <person name="Murthy T.V.S."/>
            <person name="Zhu C."/>
            <person name="Berger M.F."/>
            <person name="Camargo A.A."/>
            <person name="Kelley F."/>
            <person name="McCarron S."/>
            <person name="Jepson D."/>
            <person name="Richardson A."/>
            <person name="Raphael J."/>
            <person name="Moreira D."/>
            <person name="Taycher E."/>
            <person name="Zuo D."/>
            <person name="Mohr S."/>
            <person name="Kane M.F."/>
            <person name="Williamson J."/>
            <person name="Simpson A.J.G."/>
            <person name="Bulyk M.L."/>
            <person name="Harlow E."/>
            <person name="Marsischky G."/>
            <person name="Kolodner R.D."/>
            <person name="LaBaer J."/>
        </authorList>
    </citation>
    <scope>NUCLEOTIDE SEQUENCE [GENOMIC DNA]</scope>
    <source>
        <strain>ATCC 204508 / S288c</strain>
    </source>
</reference>
<reference key="4">
    <citation type="journal article" date="2003" name="Nature">
        <title>Global analysis of protein expression in yeast.</title>
        <authorList>
            <person name="Ghaemmaghami S."/>
            <person name="Huh W.-K."/>
            <person name="Bower K."/>
            <person name="Howson R.W."/>
            <person name="Belle A."/>
            <person name="Dephoure N."/>
            <person name="O'Shea E.K."/>
            <person name="Weissman J.S."/>
        </authorList>
    </citation>
    <scope>LEVEL OF PROTEIN EXPRESSION [LARGE SCALE ANALYSIS]</scope>
</reference>
<reference key="5">
    <citation type="journal article" date="2003" name="Proc. Natl. Acad. Sci. U.S.A.">
        <title>The 1.1-A resolution crystal structure of DJ-1, the protein mutated in autosomal recessive early onset Parkinson's disease.</title>
        <authorList>
            <person name="Wilson M.A."/>
            <person name="Collins J.L."/>
            <person name="Hod Y."/>
            <person name="Ringe D."/>
            <person name="Petsko G.A."/>
        </authorList>
    </citation>
    <scope>LACK OF PROTEASE ACTIVITY</scope>
</reference>
<reference key="6">
    <citation type="journal article" date="2007" name="Free Radic. Biol. Med.">
        <title>Saccharomyces cerevisiae Hsp31p, a stress response protein conferring protection against reactive oxygen species.</title>
        <authorList>
            <person name="Skoneczna A."/>
            <person name="Micialkiewicz A."/>
            <person name="Skoneczny M."/>
        </authorList>
    </citation>
    <scope>FUNCTION</scope>
    <scope>INDUCTION</scope>
    <scope>DISRUPTION PHENOTYPE</scope>
</reference>
<reference key="7">
    <citation type="journal article" date="2014" name="BMC Evol. Biol.">
        <title>Identification of glutathione (GSH)-independent glyoxalase III from Schizosaccharomyces pombe.</title>
        <authorList>
            <person name="Zhao Q."/>
            <person name="Su Y."/>
            <person name="Wang Z."/>
            <person name="Chen C."/>
            <person name="Wu T."/>
            <person name="Huang Y."/>
        </authorList>
    </citation>
    <scope>CATALYTIC ACTIVITY</scope>
    <scope>BIOPHYSICOCHEMICAL PROPERTIES</scope>
</reference>
<reference key="8">
    <citation type="journal article" date="2014" name="J. Biol. Chem.">
        <title>A glutathione-independent glyoxalase of the DJ-1 superfamily plays an important role in managing metabolically generated methylglyoxal in Candida albicans.</title>
        <authorList>
            <person name="Hasim S."/>
            <person name="Hussin N.A."/>
            <person name="Alomar F."/>
            <person name="Bidasee K.R."/>
            <person name="Nickerson K.W."/>
            <person name="Wilson M.A."/>
        </authorList>
    </citation>
    <scope>FUNCTION</scope>
    <scope>CATALYTIC ACTIVITY</scope>
</reference>
<reference key="9">
    <citation type="journal article" date="2014" name="Proc. Natl. Acad. Sci. U.S.A.">
        <title>Yeast DJ-1 superfamily members are required for diauxic-shift reprogramming and cell survival in stationary phase.</title>
        <authorList>
            <person name="Miller-Fleming L."/>
            <person name="Antas P."/>
            <person name="Pais T.F."/>
            <person name="Smalley J.L."/>
            <person name="Giorgini F."/>
            <person name="Outeiro T.F."/>
        </authorList>
    </citation>
    <scope>INDUCTION</scope>
    <scope>DISRUPTION PHENOTYPE</scope>
    <scope>SUBCELLULAR LOCATION</scope>
</reference>
<reference key="10">
    <citation type="journal article" date="2004" name="Proc. Natl. Acad. Sci. U.S.A.">
        <title>The 1.8-A resolution crystal structure of YDR533Cp from Saccharomyces cerevisiae: a member of the DJ-1/ThiJ/PfpI superfamily.</title>
        <authorList>
            <person name="Wilson M.A."/>
            <person name="St Amour C.V."/>
            <person name="Collins J.L."/>
            <person name="Ringe D."/>
            <person name="Petsko G.A."/>
        </authorList>
    </citation>
    <scope>X-RAY CRYSTALLOGRAPHY (1.8 ANGSTROMS)</scope>
    <scope>OXIDATION AT CYS-138</scope>
    <scope>SUBUNIT</scope>
    <scope>ACTIVE SITE</scope>
</reference>
<reference key="11">
    <citation type="journal article" date="2004" name="Structure">
        <title>Crystal structure of the YDR533c S. cerevisiae protein, a class II member of the Hsp31 family.</title>
        <authorList>
            <person name="Graille M."/>
            <person name="Quevillon-Cheruel S."/>
            <person name="Leulliot N."/>
            <person name="Zhou C.-Z."/>
            <person name="de la Sierra Gallay I.L."/>
            <person name="Jacquamet L."/>
            <person name="Ferrer J.-L."/>
            <person name="Liger D."/>
            <person name="Poupon A."/>
            <person name="Janin J."/>
            <person name="van Tilbeurgh H."/>
        </authorList>
    </citation>
    <scope>X-RAY CRYSTALLOGRAPHY (1.85 ANGSTROMS)</scope>
    <scope>SUBUNIT</scope>
    <scope>ACTIVE SITE</scope>
</reference>
<evidence type="ECO:0000250" key="1">
    <source>
        <dbReference type="UniProtKB" id="Q5AF03"/>
    </source>
</evidence>
<evidence type="ECO:0000269" key="2">
    <source>
    </source>
</evidence>
<evidence type="ECO:0000269" key="3">
    <source>
    </source>
</evidence>
<evidence type="ECO:0000269" key="4">
    <source>
    </source>
</evidence>
<evidence type="ECO:0000269" key="5">
    <source>
    </source>
</evidence>
<evidence type="ECO:0000269" key="6">
    <source>
    </source>
</evidence>
<evidence type="ECO:0000269" key="7">
    <source>
    </source>
</evidence>
<evidence type="ECO:0000269" key="8">
    <source>
    </source>
</evidence>
<evidence type="ECO:0000269" key="9">
    <source>
    </source>
</evidence>
<evidence type="ECO:0000303" key="10">
    <source>
    </source>
</evidence>
<evidence type="ECO:0000303" key="11">
    <source>
    </source>
</evidence>
<evidence type="ECO:0000305" key="12"/>
<evidence type="ECO:0000305" key="13">
    <source>
    </source>
</evidence>
<evidence type="ECO:0000305" key="14">
    <source>
    </source>
</evidence>
<evidence type="ECO:0000312" key="15">
    <source>
        <dbReference type="SGD" id="S000002941"/>
    </source>
</evidence>
<evidence type="ECO:0007829" key="16">
    <source>
        <dbReference type="PDB" id="1QVZ"/>
    </source>
</evidence>
<evidence type="ECO:0007829" key="17">
    <source>
        <dbReference type="PDB" id="4QYX"/>
    </source>
</evidence>
<organism>
    <name type="scientific">Saccharomyces cerevisiae (strain ATCC 204508 / S288c)</name>
    <name type="common">Baker's yeast</name>
    <dbReference type="NCBI Taxonomy" id="559292"/>
    <lineage>
        <taxon>Eukaryota</taxon>
        <taxon>Fungi</taxon>
        <taxon>Dikarya</taxon>
        <taxon>Ascomycota</taxon>
        <taxon>Saccharomycotina</taxon>
        <taxon>Saccharomycetes</taxon>
        <taxon>Saccharomycetales</taxon>
        <taxon>Saccharomycetaceae</taxon>
        <taxon>Saccharomyces</taxon>
    </lineage>
</organism>
<comment type="function">
    <text evidence="6 7 8">Catalyzes the conversion of methylglyoxal (MG) to D-lactate in a single glutathione (GSH)-independent step. May play a role in detoxifying endogenously produced glyoxals (PubMed:24302734). Involved in protection against reactive oxygen species (ROS) (PubMed:17395014). Important for viability in stationary phase. May negatively regulate TORC1 in response to nutrient limitation (PubMed:24706893).</text>
</comment>
<comment type="catalytic activity">
    <reaction evidence="7 9">
        <text>methylglyoxal + H2O = (R)-lactate + H(+)</text>
        <dbReference type="Rhea" id="RHEA:27754"/>
        <dbReference type="ChEBI" id="CHEBI:15377"/>
        <dbReference type="ChEBI" id="CHEBI:15378"/>
        <dbReference type="ChEBI" id="CHEBI:16004"/>
        <dbReference type="ChEBI" id="CHEBI:17158"/>
        <dbReference type="EC" id="4.2.1.130"/>
    </reaction>
</comment>
<comment type="biophysicochemical properties">
    <kinetics>
        <KM evidence="9">1.5 mM for methylglyoxal</KM>
        <text evidence="9">kcat is 75.0 min(-1) with methylglyoxal as substrate.</text>
    </kinetics>
</comment>
<comment type="subunit">
    <text evidence="4 5">Homodimer.</text>
</comment>
<comment type="subcellular location">
    <subcellularLocation>
        <location evidence="8">Cytoplasm</location>
        <location evidence="8">P-body</location>
    </subcellularLocation>
    <text evidence="8">Present in processing bodies (P-bodies) and stress granule (SG) foci upon glucose starvation and heat shock.</text>
</comment>
<comment type="induction">
    <text evidence="6 8">Up-regulated 10- to 30-fold during entry into stationary phase, by hydrogen peroxide or diamide stress, by heat stress, and by growth in the presence of the proline analog azetidine-2-carboxylic acid.</text>
</comment>
<comment type="PTM">
    <text evidence="4">Cys-138 is easily oxidized to sulfinic acid.</text>
</comment>
<comment type="disruption phenotype">
    <text evidence="6 8">Results in higher sensitivity to oxidative stress, reduced thermotolerance, accumulation of higher levels of reactive oxygen species, and reduced chronological life span.</text>
</comment>
<comment type="miscellaneous">
    <text evidence="2">No protease activity could be detected.</text>
</comment>
<comment type="miscellaneous">
    <text evidence="3">Present with 358 molecules/cell in log phase SD medium.</text>
</comment>
<comment type="similarity">
    <text evidence="12">Belongs to the peptidase C56 family. HSP31-like subfamily.</text>
</comment>